<accession>Q2FQ56</accession>
<sequence length="412" mass="46218">MAEAARHPDDMKTPDELYRYLVDRVAGMESQNQELKEQIRQLESDKRYIETQKIRYEREVRKLKSEIEHLKTPPLIVGTITDIIDSGRVVVRSSAGPRFLVRVSQAVNPTTLKAGVRCTLNQQSLAIVEVLPSTYDSQVYGMELVDAPTETYEDIGGLEKQIMEIREAVELPMTRPDLFEKIGINPPKGVLLYGPPGTGKTLLAKAVAHETHAIFLHTVGSELVQKYIGEGARLVRELFDLAKEKAPSIVFIDEIDAIGASRTEAMTSGDREVQRTLMQLLAAMDGFEPRGDVKIIGATNRIDILDAALLRPGRFDRIIEIPLPDTEGRYSILKVHTRCMNLSEDVDLMEVARLTEGRNGAELNAICMEAGMFAIRKEHPQVDQEDFLTALNKFRCDFERDHRLTTAGVMFA</sequence>
<comment type="function">
    <text evidence="1">ATPase which is responsible for recognizing, binding, unfolding and translocation of substrate proteins into the archaeal 20S proteasome core particle. Is essential for opening the gate of the 20S proteasome via an interaction with its C-terminus, thereby allowing substrate entry and access to the site of proteolysis. Thus, the C-termini of the proteasomal ATPase function like a 'key in a lock' to induce gate opening and therefore regulate proteolysis. Unfolding activity requires energy from ATP hydrolysis, whereas ATP binding alone promotes ATPase-20S proteasome association which triggers gate opening, and supports translocation of unfolded substrates.</text>
</comment>
<comment type="subunit">
    <text evidence="1">Homohexamer. The hexameric complex has a two-ring architecture resembling a top hat that caps the 20S proteasome core at one or both ends. Upon ATP-binding, the C-terminus of PAN interacts with the alpha-rings of the proteasome core by binding to the intersubunit pockets.</text>
</comment>
<comment type="subcellular location">
    <subcellularLocation>
        <location evidence="1">Cytoplasm</location>
    </subcellularLocation>
</comment>
<comment type="domain">
    <text evidence="1">Consists of three main regions, an N-terminal coiled-coil domain that may assist in substrate recognition, an interdomain involved in PAN hexamerization, and a C-terminal ATPase domain of the AAA type.</text>
</comment>
<comment type="similarity">
    <text evidence="1">Belongs to the AAA ATPase family.</text>
</comment>
<organism>
    <name type="scientific">Methanospirillum hungatei JF-1 (strain ATCC 27890 / DSM 864 / NBRC 100397 / JF-1)</name>
    <dbReference type="NCBI Taxonomy" id="323259"/>
    <lineage>
        <taxon>Archaea</taxon>
        <taxon>Methanobacteriati</taxon>
        <taxon>Methanobacteriota</taxon>
        <taxon>Stenosarchaea group</taxon>
        <taxon>Methanomicrobia</taxon>
        <taxon>Methanomicrobiales</taxon>
        <taxon>Methanospirillaceae</taxon>
        <taxon>Methanospirillum</taxon>
    </lineage>
</organism>
<feature type="chain" id="PRO_1000017921" description="Proteasome-activating nucleotidase">
    <location>
        <begin position="1"/>
        <end position="412"/>
    </location>
</feature>
<feature type="region of interest" description="Docks into pockets in the proteasome alpha-ring to cause gate opening" evidence="1">
    <location>
        <begin position="410"/>
        <end position="412"/>
    </location>
</feature>
<feature type="coiled-coil region" evidence="1">
    <location>
        <begin position="18"/>
        <end position="72"/>
    </location>
</feature>
<feature type="binding site" evidence="1">
    <location>
        <begin position="197"/>
        <end position="202"/>
    </location>
    <ligand>
        <name>ATP</name>
        <dbReference type="ChEBI" id="CHEBI:30616"/>
    </ligand>
</feature>
<feature type="binding site" evidence="1">
    <location>
        <position position="336"/>
    </location>
    <ligand>
        <name>ATP</name>
        <dbReference type="ChEBI" id="CHEBI:30616"/>
    </ligand>
</feature>
<proteinExistence type="inferred from homology"/>
<evidence type="ECO:0000255" key="1">
    <source>
        <dbReference type="HAMAP-Rule" id="MF_00553"/>
    </source>
</evidence>
<dbReference type="EMBL" id="CP000254">
    <property type="protein sequence ID" value="ABD40788.1"/>
    <property type="molecule type" value="Genomic_DNA"/>
</dbReference>
<dbReference type="RefSeq" id="WP_011448067.1">
    <property type="nucleotide sequence ID" value="NC_007796.1"/>
</dbReference>
<dbReference type="SMR" id="Q2FQ56"/>
<dbReference type="FunCoup" id="Q2FQ56">
    <property type="interactions" value="119"/>
</dbReference>
<dbReference type="STRING" id="323259.Mhun_1038"/>
<dbReference type="EnsemblBacteria" id="ABD40788">
    <property type="protein sequence ID" value="ABD40788"/>
    <property type="gene ID" value="Mhun_1038"/>
</dbReference>
<dbReference type="GeneID" id="3924751"/>
<dbReference type="KEGG" id="mhu:Mhun_1038"/>
<dbReference type="eggNOG" id="arCOG01306">
    <property type="taxonomic scope" value="Archaea"/>
</dbReference>
<dbReference type="HOGENOM" id="CLU_000688_2_0_2"/>
<dbReference type="InParanoid" id="Q2FQ56"/>
<dbReference type="OrthoDB" id="77269at2157"/>
<dbReference type="Proteomes" id="UP000001941">
    <property type="component" value="Chromosome"/>
</dbReference>
<dbReference type="GO" id="GO:0005737">
    <property type="term" value="C:cytoplasm"/>
    <property type="evidence" value="ECO:0007669"/>
    <property type="project" value="UniProtKB-SubCell"/>
</dbReference>
<dbReference type="GO" id="GO:0022623">
    <property type="term" value="C:proteasome-activating nucleotidase complex"/>
    <property type="evidence" value="ECO:0007669"/>
    <property type="project" value="UniProtKB-UniRule"/>
</dbReference>
<dbReference type="GO" id="GO:0005524">
    <property type="term" value="F:ATP binding"/>
    <property type="evidence" value="ECO:0007669"/>
    <property type="project" value="UniProtKB-UniRule"/>
</dbReference>
<dbReference type="GO" id="GO:0016887">
    <property type="term" value="F:ATP hydrolysis activity"/>
    <property type="evidence" value="ECO:0007669"/>
    <property type="project" value="UniProtKB-UniRule"/>
</dbReference>
<dbReference type="GO" id="GO:0010498">
    <property type="term" value="P:proteasomal protein catabolic process"/>
    <property type="evidence" value="ECO:0007669"/>
    <property type="project" value="UniProtKB-UniRule"/>
</dbReference>
<dbReference type="GO" id="GO:0043335">
    <property type="term" value="P:protein unfolding"/>
    <property type="evidence" value="ECO:0007669"/>
    <property type="project" value="UniProtKB-UniRule"/>
</dbReference>
<dbReference type="CDD" id="cd19502">
    <property type="entry name" value="RecA-like_PAN_like"/>
    <property type="match status" value="1"/>
</dbReference>
<dbReference type="FunFam" id="3.40.50.300:FF:000030">
    <property type="entry name" value="26S protease regulatory subunit 8"/>
    <property type="match status" value="1"/>
</dbReference>
<dbReference type="Gene3D" id="1.10.8.60">
    <property type="match status" value="1"/>
</dbReference>
<dbReference type="Gene3D" id="2.40.50.140">
    <property type="entry name" value="Nucleic acid-binding proteins"/>
    <property type="match status" value="1"/>
</dbReference>
<dbReference type="Gene3D" id="3.40.50.300">
    <property type="entry name" value="P-loop containing nucleotide triphosphate hydrolases"/>
    <property type="match status" value="1"/>
</dbReference>
<dbReference type="HAMAP" id="MF_00553">
    <property type="entry name" value="PAN"/>
    <property type="match status" value="1"/>
</dbReference>
<dbReference type="InterPro" id="IPR050221">
    <property type="entry name" value="26S_Proteasome_ATPase"/>
</dbReference>
<dbReference type="InterPro" id="IPR003593">
    <property type="entry name" value="AAA+_ATPase"/>
</dbReference>
<dbReference type="InterPro" id="IPR041569">
    <property type="entry name" value="AAA_lid_3"/>
</dbReference>
<dbReference type="InterPro" id="IPR003959">
    <property type="entry name" value="ATPase_AAA_core"/>
</dbReference>
<dbReference type="InterPro" id="IPR003960">
    <property type="entry name" value="ATPase_AAA_CS"/>
</dbReference>
<dbReference type="InterPro" id="IPR012340">
    <property type="entry name" value="NA-bd_OB-fold"/>
</dbReference>
<dbReference type="InterPro" id="IPR023501">
    <property type="entry name" value="Nucleotidase_PAN"/>
</dbReference>
<dbReference type="InterPro" id="IPR027417">
    <property type="entry name" value="P-loop_NTPase"/>
</dbReference>
<dbReference type="InterPro" id="IPR032501">
    <property type="entry name" value="Prot_ATP_ID_OB_2nd"/>
</dbReference>
<dbReference type="NCBIfam" id="NF003069">
    <property type="entry name" value="PRK03992.1"/>
    <property type="match status" value="1"/>
</dbReference>
<dbReference type="NCBIfam" id="TIGR01242">
    <property type="entry name" value="proteasome-activating nucleotidase"/>
    <property type="match status" value="1"/>
</dbReference>
<dbReference type="PANTHER" id="PTHR23073">
    <property type="entry name" value="26S PROTEASOME REGULATORY SUBUNIT"/>
    <property type="match status" value="1"/>
</dbReference>
<dbReference type="Pfam" id="PF00004">
    <property type="entry name" value="AAA"/>
    <property type="match status" value="1"/>
</dbReference>
<dbReference type="Pfam" id="PF17862">
    <property type="entry name" value="AAA_lid_3"/>
    <property type="match status" value="1"/>
</dbReference>
<dbReference type="Pfam" id="PF16450">
    <property type="entry name" value="Prot_ATP_ID_OB_C"/>
    <property type="match status" value="1"/>
</dbReference>
<dbReference type="SMART" id="SM00382">
    <property type="entry name" value="AAA"/>
    <property type="match status" value="1"/>
</dbReference>
<dbReference type="SUPFAM" id="SSF52540">
    <property type="entry name" value="P-loop containing nucleoside triphosphate hydrolases"/>
    <property type="match status" value="1"/>
</dbReference>
<dbReference type="PROSITE" id="PS00674">
    <property type="entry name" value="AAA"/>
    <property type="match status" value="1"/>
</dbReference>
<gene>
    <name evidence="1" type="primary">pan</name>
    <name type="ordered locus">Mhun_1038</name>
</gene>
<keyword id="KW-0067">ATP-binding</keyword>
<keyword id="KW-0143">Chaperone</keyword>
<keyword id="KW-0175">Coiled coil</keyword>
<keyword id="KW-0963">Cytoplasm</keyword>
<keyword id="KW-0547">Nucleotide-binding</keyword>
<keyword id="KW-0647">Proteasome</keyword>
<keyword id="KW-1185">Reference proteome</keyword>
<protein>
    <recommendedName>
        <fullName evidence="1">Proteasome-activating nucleotidase</fullName>
        <shortName evidence="1">PAN</shortName>
    </recommendedName>
    <alternativeName>
        <fullName evidence="1">Proteasomal ATPase</fullName>
    </alternativeName>
    <alternativeName>
        <fullName evidence="1">Proteasome regulatory ATPase</fullName>
    </alternativeName>
    <alternativeName>
        <fullName evidence="1">Proteasome regulatory particle</fullName>
    </alternativeName>
</protein>
<reference key="1">
    <citation type="journal article" date="2016" name="Stand. Genomic Sci.">
        <title>Complete genome sequence of Methanospirillum hungatei type strain JF1.</title>
        <authorList>
            <person name="Gunsalus R.P."/>
            <person name="Cook L.E."/>
            <person name="Crable B."/>
            <person name="Rohlin L."/>
            <person name="McDonald E."/>
            <person name="Mouttaki H."/>
            <person name="Sieber J.R."/>
            <person name="Poweleit N."/>
            <person name="Zhou H."/>
            <person name="Lapidus A.L."/>
            <person name="Daligault H.E."/>
            <person name="Land M."/>
            <person name="Gilna P."/>
            <person name="Ivanova N."/>
            <person name="Kyrpides N."/>
            <person name="Culley D.E."/>
            <person name="McInerney M.J."/>
        </authorList>
    </citation>
    <scope>NUCLEOTIDE SEQUENCE [LARGE SCALE GENOMIC DNA]</scope>
    <source>
        <strain>ATCC 27890 / DSM 864 / NBRC 100397 / JF-1</strain>
    </source>
</reference>
<name>PAN_METHJ</name>